<accession>Q1MMG6</accession>
<protein>
    <recommendedName>
        <fullName evidence="1">Deoxyuridine 5'-triphosphate nucleotidohydrolase</fullName>
        <shortName evidence="1">dUTPase</shortName>
        <ecNumber evidence="1">3.6.1.23</ecNumber>
    </recommendedName>
    <alternativeName>
        <fullName evidence="1">dUTP pyrophosphatase</fullName>
    </alternativeName>
</protein>
<comment type="function">
    <text evidence="1">This enzyme is involved in nucleotide metabolism: it produces dUMP, the immediate precursor of thymidine nucleotides and it decreases the intracellular concentration of dUTP so that uracil cannot be incorporated into DNA.</text>
</comment>
<comment type="catalytic activity">
    <reaction evidence="1">
        <text>dUTP + H2O = dUMP + diphosphate + H(+)</text>
        <dbReference type="Rhea" id="RHEA:10248"/>
        <dbReference type="ChEBI" id="CHEBI:15377"/>
        <dbReference type="ChEBI" id="CHEBI:15378"/>
        <dbReference type="ChEBI" id="CHEBI:33019"/>
        <dbReference type="ChEBI" id="CHEBI:61555"/>
        <dbReference type="ChEBI" id="CHEBI:246422"/>
        <dbReference type="EC" id="3.6.1.23"/>
    </reaction>
</comment>
<comment type="cofactor">
    <cofactor evidence="1">
        <name>Mg(2+)</name>
        <dbReference type="ChEBI" id="CHEBI:18420"/>
    </cofactor>
</comment>
<comment type="pathway">
    <text evidence="1">Pyrimidine metabolism; dUMP biosynthesis; dUMP from dCTP (dUTP route): step 2/2.</text>
</comment>
<comment type="similarity">
    <text evidence="1">Belongs to the dUTPase family.</text>
</comment>
<organism>
    <name type="scientific">Rhizobium johnstonii (strain DSM 114642 / LMG 32736 / 3841)</name>
    <name type="common">Rhizobium leguminosarum bv. viciae</name>
    <dbReference type="NCBI Taxonomy" id="216596"/>
    <lineage>
        <taxon>Bacteria</taxon>
        <taxon>Pseudomonadati</taxon>
        <taxon>Pseudomonadota</taxon>
        <taxon>Alphaproteobacteria</taxon>
        <taxon>Hyphomicrobiales</taxon>
        <taxon>Rhizobiaceae</taxon>
        <taxon>Rhizobium/Agrobacterium group</taxon>
        <taxon>Rhizobium</taxon>
        <taxon>Rhizobium johnstonii</taxon>
    </lineage>
</organism>
<gene>
    <name evidence="1" type="primary">dut</name>
    <name type="ordered locus">RL0346</name>
</gene>
<feature type="chain" id="PRO_1000015501" description="Deoxyuridine 5'-triphosphate nucleotidohydrolase">
    <location>
        <begin position="1"/>
        <end position="156"/>
    </location>
</feature>
<feature type="binding site" evidence="1">
    <location>
        <begin position="76"/>
        <end position="78"/>
    </location>
    <ligand>
        <name>substrate</name>
    </ligand>
</feature>
<feature type="binding site" evidence="1">
    <location>
        <position position="89"/>
    </location>
    <ligand>
        <name>substrate</name>
    </ligand>
</feature>
<feature type="binding site" evidence="1">
    <location>
        <begin position="93"/>
        <end position="95"/>
    </location>
    <ligand>
        <name>substrate</name>
    </ligand>
</feature>
<feature type="binding site" evidence="1">
    <location>
        <position position="103"/>
    </location>
    <ligand>
        <name>substrate</name>
    </ligand>
</feature>
<name>DUT_RHIJ3</name>
<reference key="1">
    <citation type="journal article" date="2006" name="Genome Biol.">
        <title>The genome of Rhizobium leguminosarum has recognizable core and accessory components.</title>
        <authorList>
            <person name="Young J.P.W."/>
            <person name="Crossman L.C."/>
            <person name="Johnston A.W.B."/>
            <person name="Thomson N.R."/>
            <person name="Ghazoui Z.F."/>
            <person name="Hull K.H."/>
            <person name="Wexler M."/>
            <person name="Curson A.R.J."/>
            <person name="Todd J.D."/>
            <person name="Poole P.S."/>
            <person name="Mauchline T.H."/>
            <person name="East A.K."/>
            <person name="Quail M.A."/>
            <person name="Churcher C."/>
            <person name="Arrowsmith C."/>
            <person name="Cherevach I."/>
            <person name="Chillingworth T."/>
            <person name="Clarke K."/>
            <person name="Cronin A."/>
            <person name="Davis P."/>
            <person name="Fraser A."/>
            <person name="Hance Z."/>
            <person name="Hauser H."/>
            <person name="Jagels K."/>
            <person name="Moule S."/>
            <person name="Mungall K."/>
            <person name="Norbertczak H."/>
            <person name="Rabbinowitsch E."/>
            <person name="Sanders M."/>
            <person name="Simmonds M."/>
            <person name="Whitehead S."/>
            <person name="Parkhill J."/>
        </authorList>
    </citation>
    <scope>NUCLEOTIDE SEQUENCE [LARGE SCALE GENOMIC DNA]</scope>
    <source>
        <strain>DSM 114642 / LMG 32736 / 3841</strain>
    </source>
</reference>
<evidence type="ECO:0000255" key="1">
    <source>
        <dbReference type="HAMAP-Rule" id="MF_00116"/>
    </source>
</evidence>
<proteinExistence type="inferred from homology"/>
<keyword id="KW-0378">Hydrolase</keyword>
<keyword id="KW-0460">Magnesium</keyword>
<keyword id="KW-0479">Metal-binding</keyword>
<keyword id="KW-0546">Nucleotide metabolism</keyword>
<dbReference type="EC" id="3.6.1.23" evidence="1"/>
<dbReference type="EMBL" id="AM236080">
    <property type="protein sequence ID" value="CAK05836.1"/>
    <property type="molecule type" value="Genomic_DNA"/>
</dbReference>
<dbReference type="RefSeq" id="WP_011650147.1">
    <property type="nucleotide sequence ID" value="NC_008380.1"/>
</dbReference>
<dbReference type="SMR" id="Q1MMG6"/>
<dbReference type="EnsemblBacteria" id="CAK05836">
    <property type="protein sequence ID" value="CAK05836"/>
    <property type="gene ID" value="RL0346"/>
</dbReference>
<dbReference type="KEGG" id="rle:RL0346"/>
<dbReference type="eggNOG" id="COG0756">
    <property type="taxonomic scope" value="Bacteria"/>
</dbReference>
<dbReference type="HOGENOM" id="CLU_068508_1_0_5"/>
<dbReference type="UniPathway" id="UPA00610">
    <property type="reaction ID" value="UER00666"/>
</dbReference>
<dbReference type="Proteomes" id="UP000006575">
    <property type="component" value="Chromosome"/>
</dbReference>
<dbReference type="GO" id="GO:0004170">
    <property type="term" value="F:dUTP diphosphatase activity"/>
    <property type="evidence" value="ECO:0007669"/>
    <property type="project" value="UniProtKB-UniRule"/>
</dbReference>
<dbReference type="GO" id="GO:0000287">
    <property type="term" value="F:magnesium ion binding"/>
    <property type="evidence" value="ECO:0007669"/>
    <property type="project" value="UniProtKB-UniRule"/>
</dbReference>
<dbReference type="GO" id="GO:0006226">
    <property type="term" value="P:dUMP biosynthetic process"/>
    <property type="evidence" value="ECO:0007669"/>
    <property type="project" value="UniProtKB-UniRule"/>
</dbReference>
<dbReference type="GO" id="GO:0046081">
    <property type="term" value="P:dUTP catabolic process"/>
    <property type="evidence" value="ECO:0007669"/>
    <property type="project" value="InterPro"/>
</dbReference>
<dbReference type="CDD" id="cd07557">
    <property type="entry name" value="trimeric_dUTPase"/>
    <property type="match status" value="1"/>
</dbReference>
<dbReference type="Gene3D" id="2.70.40.10">
    <property type="match status" value="1"/>
</dbReference>
<dbReference type="HAMAP" id="MF_00116">
    <property type="entry name" value="dUTPase_bact"/>
    <property type="match status" value="1"/>
</dbReference>
<dbReference type="InterPro" id="IPR008181">
    <property type="entry name" value="dUTPase"/>
</dbReference>
<dbReference type="InterPro" id="IPR029054">
    <property type="entry name" value="dUTPase-like"/>
</dbReference>
<dbReference type="InterPro" id="IPR036157">
    <property type="entry name" value="dUTPase-like_sf"/>
</dbReference>
<dbReference type="InterPro" id="IPR033704">
    <property type="entry name" value="dUTPase_trimeric"/>
</dbReference>
<dbReference type="NCBIfam" id="TIGR00576">
    <property type="entry name" value="dut"/>
    <property type="match status" value="1"/>
</dbReference>
<dbReference type="NCBIfam" id="NF001862">
    <property type="entry name" value="PRK00601.1"/>
    <property type="match status" value="1"/>
</dbReference>
<dbReference type="PANTHER" id="PTHR11241">
    <property type="entry name" value="DEOXYURIDINE 5'-TRIPHOSPHATE NUCLEOTIDOHYDROLASE"/>
    <property type="match status" value="1"/>
</dbReference>
<dbReference type="PANTHER" id="PTHR11241:SF0">
    <property type="entry name" value="DEOXYURIDINE 5'-TRIPHOSPHATE NUCLEOTIDOHYDROLASE"/>
    <property type="match status" value="1"/>
</dbReference>
<dbReference type="Pfam" id="PF00692">
    <property type="entry name" value="dUTPase"/>
    <property type="match status" value="1"/>
</dbReference>
<dbReference type="SUPFAM" id="SSF51283">
    <property type="entry name" value="dUTPase-like"/>
    <property type="match status" value="1"/>
</dbReference>
<sequence>MTIHHDLSPTLNLIRLANGEGLDLPAYESKGAAGMDLRAAVDEAAPLTLLPGKRALVPTGFIFEIPEGFEGQVRPRSGLAFKNGITCLNSPGTVDSDYRGEVKVLLANLGEEAFVISRGMRIAQMVIAPVTQMRVAEITEASETMRGAGGFGSTGV</sequence>